<comment type="function">
    <text evidence="1">Structure-specific nuclease with 5'-flap endonuclease and 5'-3' exonuclease activities involved in DNA replication and repair. During DNA replication, cleaves the 5'-overhanging flap structure that is generated by displacement synthesis when DNA polymerase encounters the 5'-end of a downstream Okazaki fragment. It enters the flap from the 5'-end and then tracks to cleave the flap base, leaving a nick for ligation. Also involved in the long patch base excision repair (LP-BER) pathway, by cleaving within the apurinic/apyrimidinic (AP) site-terminated flap. Acts as a genome stabilization factor that prevents flaps from equilibrating into structures that lead to duplications and deletions. Also possesses 5'-3' exonuclease activity on nicked or gapped double-stranded DNA, and exhibits RNase H activity. Also involved in replication and repair of rDNA and in repairing mitochondrial DNA.</text>
</comment>
<comment type="cofactor">
    <cofactor evidence="1">
        <name>Mg(2+)</name>
        <dbReference type="ChEBI" id="CHEBI:18420"/>
    </cofactor>
    <text evidence="1">Binds 2 magnesium ions per subunit. They probably participate in the reaction catalyzed by the enzyme. May bind an additional third magnesium ion after substrate binding.</text>
</comment>
<comment type="subunit">
    <text evidence="1">Interacts with PCNA. Three molecules of FEN1 bind to one PCNA trimer with each molecule binding to one PCNA monomer. PCNA stimulates the nuclease activity without altering cleavage specificity.</text>
</comment>
<comment type="subcellular location">
    <subcellularLocation>
        <location evidence="1">Nucleus</location>
        <location evidence="1">Nucleolus</location>
    </subcellularLocation>
    <subcellularLocation>
        <location evidence="1">Nucleus</location>
        <location evidence="1">Nucleoplasm</location>
    </subcellularLocation>
    <subcellularLocation>
        <location evidence="1">Mitochondrion</location>
    </subcellularLocation>
    <text evidence="1">Resides mostly in the nucleoli and relocalizes to the nucleoplasm upon DNA damage.</text>
</comment>
<comment type="PTM">
    <text evidence="1">Phosphorylated. Phosphorylation upon DNA damage induces relocalization to the nuclear plasma.</text>
</comment>
<comment type="similarity">
    <text evidence="1">Belongs to the XPG/RAD2 endonuclease family. FEN1 subfamily.</text>
</comment>
<reference key="1">
    <citation type="journal article" date="2008" name="Nature">
        <title>The amphioxus genome and the evolution of the chordate karyotype.</title>
        <authorList>
            <person name="Putnam N.H."/>
            <person name="Butts T."/>
            <person name="Ferrier D.E.K."/>
            <person name="Furlong R.F."/>
            <person name="Hellsten U."/>
            <person name="Kawashima T."/>
            <person name="Robinson-Rechavi M."/>
            <person name="Shoguchi E."/>
            <person name="Terry A."/>
            <person name="Yu J.-K."/>
            <person name="Benito-Gutierrez E.L."/>
            <person name="Dubchak I."/>
            <person name="Garcia-Fernandez J."/>
            <person name="Gibson-Brown J.J."/>
            <person name="Grigoriev I.V."/>
            <person name="Horton A.C."/>
            <person name="de Jong P.J."/>
            <person name="Jurka J."/>
            <person name="Kapitonov V.V."/>
            <person name="Kohara Y."/>
            <person name="Kuroki Y."/>
            <person name="Lindquist E."/>
            <person name="Lucas S."/>
            <person name="Osoegawa K."/>
            <person name="Pennacchio L.A."/>
            <person name="Salamov A.A."/>
            <person name="Satou Y."/>
            <person name="Sauka-Spengler T."/>
            <person name="Schmutz J."/>
            <person name="Shin-I T."/>
            <person name="Toyoda A."/>
            <person name="Bronner-Fraser M."/>
            <person name="Fujiyama A."/>
            <person name="Holland L.Z."/>
            <person name="Holland P.W.H."/>
            <person name="Satoh N."/>
            <person name="Rokhsar D.S."/>
        </authorList>
    </citation>
    <scope>NUCLEOTIDE SEQUENCE [LARGE SCALE GENOMIC DNA]</scope>
    <source>
        <strain>S238N-H82</strain>
        <tissue>Testis</tissue>
    </source>
</reference>
<proteinExistence type="inferred from homology"/>
<feature type="chain" id="PRO_0000403494" description="Flap endonuclease 1">
    <location>
        <begin position="1"/>
        <end position="380"/>
    </location>
</feature>
<feature type="region of interest" description="N-domain">
    <location>
        <begin position="1"/>
        <end position="104"/>
    </location>
</feature>
<feature type="region of interest" description="I-domain">
    <location>
        <begin position="122"/>
        <end position="253"/>
    </location>
</feature>
<feature type="region of interest" description="Disordered" evidence="2">
    <location>
        <begin position="328"/>
        <end position="380"/>
    </location>
</feature>
<feature type="region of interest" description="Interaction with PCNA" evidence="1">
    <location>
        <begin position="336"/>
        <end position="344"/>
    </location>
</feature>
<feature type="compositionally biased region" description="Basic residues" evidence="2">
    <location>
        <begin position="365"/>
        <end position="380"/>
    </location>
</feature>
<feature type="binding site" evidence="1">
    <location>
        <position position="34"/>
    </location>
    <ligand>
        <name>Mg(2+)</name>
        <dbReference type="ChEBI" id="CHEBI:18420"/>
        <label>1</label>
    </ligand>
</feature>
<feature type="binding site" evidence="1">
    <location>
        <position position="47"/>
    </location>
    <ligand>
        <name>DNA</name>
        <dbReference type="ChEBI" id="CHEBI:16991"/>
    </ligand>
</feature>
<feature type="binding site" evidence="1">
    <location>
        <position position="70"/>
    </location>
    <ligand>
        <name>DNA</name>
        <dbReference type="ChEBI" id="CHEBI:16991"/>
    </ligand>
</feature>
<feature type="binding site" evidence="1">
    <location>
        <position position="86"/>
    </location>
    <ligand>
        <name>Mg(2+)</name>
        <dbReference type="ChEBI" id="CHEBI:18420"/>
        <label>1</label>
    </ligand>
</feature>
<feature type="binding site" evidence="1">
    <location>
        <position position="158"/>
    </location>
    <ligand>
        <name>DNA</name>
        <dbReference type="ChEBI" id="CHEBI:16991"/>
    </ligand>
</feature>
<feature type="binding site" evidence="1">
    <location>
        <position position="158"/>
    </location>
    <ligand>
        <name>Mg(2+)</name>
        <dbReference type="ChEBI" id="CHEBI:18420"/>
        <label>1</label>
    </ligand>
</feature>
<feature type="binding site" evidence="1">
    <location>
        <position position="160"/>
    </location>
    <ligand>
        <name>Mg(2+)</name>
        <dbReference type="ChEBI" id="CHEBI:18420"/>
        <label>1</label>
    </ligand>
</feature>
<feature type="binding site" evidence="1">
    <location>
        <position position="179"/>
    </location>
    <ligand>
        <name>Mg(2+)</name>
        <dbReference type="ChEBI" id="CHEBI:18420"/>
        <label>2</label>
    </ligand>
</feature>
<feature type="binding site" evidence="1">
    <location>
        <position position="181"/>
    </location>
    <ligand>
        <name>Mg(2+)</name>
        <dbReference type="ChEBI" id="CHEBI:18420"/>
        <label>2</label>
    </ligand>
</feature>
<feature type="binding site" evidence="1">
    <location>
        <position position="231"/>
    </location>
    <ligand>
        <name>DNA</name>
        <dbReference type="ChEBI" id="CHEBI:16991"/>
    </ligand>
</feature>
<feature type="binding site" evidence="1">
    <location>
        <position position="233"/>
    </location>
    <ligand>
        <name>DNA</name>
        <dbReference type="ChEBI" id="CHEBI:16991"/>
    </ligand>
</feature>
<feature type="binding site" evidence="1">
    <location>
        <position position="233"/>
    </location>
    <ligand>
        <name>Mg(2+)</name>
        <dbReference type="ChEBI" id="CHEBI:18420"/>
        <label>2</label>
    </ligand>
</feature>
<name>FEN1_BRAFL</name>
<gene>
    <name evidence="1" type="primary">FEN1</name>
    <name type="ORF">BRAFLDRAFT_275596</name>
</gene>
<accession>C3ZBT0</accession>
<dbReference type="EC" id="3.1.-.-" evidence="1"/>
<dbReference type="EMBL" id="GG666603">
    <property type="protein sequence ID" value="EEN50317.1"/>
    <property type="molecule type" value="Genomic_DNA"/>
</dbReference>
<dbReference type="RefSeq" id="XP_002594306.1">
    <property type="nucleotide sequence ID" value="XM_002594260.1"/>
</dbReference>
<dbReference type="SMR" id="C3ZBT0"/>
<dbReference type="FunCoup" id="C3ZBT0">
    <property type="interactions" value="853"/>
</dbReference>
<dbReference type="STRING" id="7739.C3ZBT0"/>
<dbReference type="eggNOG" id="KOG2519">
    <property type="taxonomic scope" value="Eukaryota"/>
</dbReference>
<dbReference type="InParanoid" id="C3ZBT0"/>
<dbReference type="Proteomes" id="UP000001554">
    <property type="component" value="Unplaced"/>
</dbReference>
<dbReference type="GO" id="GO:0005739">
    <property type="term" value="C:mitochondrion"/>
    <property type="evidence" value="ECO:0007669"/>
    <property type="project" value="UniProtKB-SubCell"/>
</dbReference>
<dbReference type="GO" id="GO:0005730">
    <property type="term" value="C:nucleolus"/>
    <property type="evidence" value="ECO:0007669"/>
    <property type="project" value="UniProtKB-SubCell"/>
</dbReference>
<dbReference type="GO" id="GO:0005654">
    <property type="term" value="C:nucleoplasm"/>
    <property type="evidence" value="ECO:0007669"/>
    <property type="project" value="UniProtKB-SubCell"/>
</dbReference>
<dbReference type="GO" id="GO:0005634">
    <property type="term" value="C:nucleus"/>
    <property type="evidence" value="ECO:0000318"/>
    <property type="project" value="GO_Central"/>
</dbReference>
<dbReference type="GO" id="GO:0008409">
    <property type="term" value="F:5'-3' exonuclease activity"/>
    <property type="evidence" value="ECO:0000318"/>
    <property type="project" value="GO_Central"/>
</dbReference>
<dbReference type="GO" id="GO:0017108">
    <property type="term" value="F:5'-flap endonuclease activity"/>
    <property type="evidence" value="ECO:0000318"/>
    <property type="project" value="GO_Central"/>
</dbReference>
<dbReference type="GO" id="GO:0003677">
    <property type="term" value="F:DNA binding"/>
    <property type="evidence" value="ECO:0007669"/>
    <property type="project" value="UniProtKB-UniRule"/>
</dbReference>
<dbReference type="GO" id="GO:0000287">
    <property type="term" value="F:magnesium ion binding"/>
    <property type="evidence" value="ECO:0000318"/>
    <property type="project" value="GO_Central"/>
</dbReference>
<dbReference type="GO" id="GO:0030145">
    <property type="term" value="F:manganese ion binding"/>
    <property type="evidence" value="ECO:0000318"/>
    <property type="project" value="GO_Central"/>
</dbReference>
<dbReference type="GO" id="GO:0004523">
    <property type="term" value="F:RNA-DNA hybrid ribonuclease activity"/>
    <property type="evidence" value="ECO:0000318"/>
    <property type="project" value="GO_Central"/>
</dbReference>
<dbReference type="GO" id="GO:0006284">
    <property type="term" value="P:base-excision repair"/>
    <property type="evidence" value="ECO:0007669"/>
    <property type="project" value="UniProtKB-UniRule"/>
</dbReference>
<dbReference type="GO" id="GO:0043137">
    <property type="term" value="P:DNA replication, removal of RNA primer"/>
    <property type="evidence" value="ECO:0007669"/>
    <property type="project" value="UniProtKB-UniRule"/>
</dbReference>
<dbReference type="CDD" id="cd09867">
    <property type="entry name" value="PIN_FEN1"/>
    <property type="match status" value="1"/>
</dbReference>
<dbReference type="FunFam" id="1.10.150.20:FF:000009">
    <property type="entry name" value="Flap endonuclease 1"/>
    <property type="match status" value="1"/>
</dbReference>
<dbReference type="FunFam" id="3.40.50.1010:FF:000003">
    <property type="entry name" value="Flap endonuclease 1"/>
    <property type="match status" value="1"/>
</dbReference>
<dbReference type="Gene3D" id="1.10.150.20">
    <property type="entry name" value="5' to 3' exonuclease, C-terminal subdomain"/>
    <property type="match status" value="1"/>
</dbReference>
<dbReference type="Gene3D" id="3.40.50.1010">
    <property type="entry name" value="5'-nuclease"/>
    <property type="match status" value="1"/>
</dbReference>
<dbReference type="HAMAP" id="MF_00614">
    <property type="entry name" value="Fen"/>
    <property type="match status" value="1"/>
</dbReference>
<dbReference type="InterPro" id="IPR036279">
    <property type="entry name" value="5-3_exonuclease_C_sf"/>
</dbReference>
<dbReference type="InterPro" id="IPR023426">
    <property type="entry name" value="Flap_endonuc"/>
</dbReference>
<dbReference type="InterPro" id="IPR008918">
    <property type="entry name" value="HhH2"/>
</dbReference>
<dbReference type="InterPro" id="IPR029060">
    <property type="entry name" value="PIN-like_dom_sf"/>
</dbReference>
<dbReference type="InterPro" id="IPR006086">
    <property type="entry name" value="XPG-I_dom"/>
</dbReference>
<dbReference type="InterPro" id="IPR006084">
    <property type="entry name" value="XPG/Rad2"/>
</dbReference>
<dbReference type="InterPro" id="IPR019974">
    <property type="entry name" value="XPG_CS"/>
</dbReference>
<dbReference type="InterPro" id="IPR006085">
    <property type="entry name" value="XPG_DNA_repair_N"/>
</dbReference>
<dbReference type="PANTHER" id="PTHR11081:SF9">
    <property type="entry name" value="FLAP ENDONUCLEASE 1"/>
    <property type="match status" value="1"/>
</dbReference>
<dbReference type="PANTHER" id="PTHR11081">
    <property type="entry name" value="FLAP ENDONUCLEASE FAMILY MEMBER"/>
    <property type="match status" value="1"/>
</dbReference>
<dbReference type="Pfam" id="PF00867">
    <property type="entry name" value="XPG_I"/>
    <property type="match status" value="1"/>
</dbReference>
<dbReference type="Pfam" id="PF00752">
    <property type="entry name" value="XPG_N"/>
    <property type="match status" value="1"/>
</dbReference>
<dbReference type="PRINTS" id="PR00853">
    <property type="entry name" value="XPGRADSUPER"/>
</dbReference>
<dbReference type="SMART" id="SM00279">
    <property type="entry name" value="HhH2"/>
    <property type="match status" value="1"/>
</dbReference>
<dbReference type="SMART" id="SM00484">
    <property type="entry name" value="XPGI"/>
    <property type="match status" value="1"/>
</dbReference>
<dbReference type="SMART" id="SM00485">
    <property type="entry name" value="XPGN"/>
    <property type="match status" value="1"/>
</dbReference>
<dbReference type="SUPFAM" id="SSF47807">
    <property type="entry name" value="5' to 3' exonuclease, C-terminal subdomain"/>
    <property type="match status" value="1"/>
</dbReference>
<dbReference type="SUPFAM" id="SSF88723">
    <property type="entry name" value="PIN domain-like"/>
    <property type="match status" value="1"/>
</dbReference>
<dbReference type="PROSITE" id="PS00841">
    <property type="entry name" value="XPG_1"/>
    <property type="match status" value="1"/>
</dbReference>
<dbReference type="PROSITE" id="PS00842">
    <property type="entry name" value="XPG_2"/>
    <property type="match status" value="1"/>
</dbReference>
<sequence length="380" mass="42875">MGIQGLAKLIGDHAPGAMKENEIKNYFGRKVAIDASMSIYQFLIAVRQDGNMLTNDAGEATSHLMGMFYRTIRMVDNGIKPVYVFDGKPPNMKSGELAKRAERREEAQKALEKAEEAGEAEDVNKFQKRLVKVTKEHNAECKKLLTLMGIPYVDAPCEAEAQCAELAKKGKVYAAGTEDMDVLTFGTNIMLRHLTFSEARKMPIKEYYYDRLLAELDLTQDQFIDLCILLGCDYCDSIRGIGPKRAIELIRQYKSIEEILKHIDTKKFPVPEDWPYDQARKLFKEPEVTPADQVELKWVDPDEEGLVQYMSNEKGFSEDRIKNGAKKLKNARHTSTQGRLDSFFKVMSSPSVKRKEPPKGAKGSASKKAKMSGGKFKKPK</sequence>
<organism>
    <name type="scientific">Branchiostoma floridae</name>
    <name type="common">Florida lancelet</name>
    <name type="synonym">Amphioxus</name>
    <dbReference type="NCBI Taxonomy" id="7739"/>
    <lineage>
        <taxon>Eukaryota</taxon>
        <taxon>Metazoa</taxon>
        <taxon>Chordata</taxon>
        <taxon>Cephalochordata</taxon>
        <taxon>Leptocardii</taxon>
        <taxon>Amphioxiformes</taxon>
        <taxon>Branchiostomatidae</taxon>
        <taxon>Branchiostoma</taxon>
    </lineage>
</organism>
<keyword id="KW-0227">DNA damage</keyword>
<keyword id="KW-0234">DNA repair</keyword>
<keyword id="KW-0235">DNA replication</keyword>
<keyword id="KW-0255">Endonuclease</keyword>
<keyword id="KW-0269">Exonuclease</keyword>
<keyword id="KW-0378">Hydrolase</keyword>
<keyword id="KW-0460">Magnesium</keyword>
<keyword id="KW-0479">Metal-binding</keyword>
<keyword id="KW-0496">Mitochondrion</keyword>
<keyword id="KW-0540">Nuclease</keyword>
<keyword id="KW-0539">Nucleus</keyword>
<keyword id="KW-0597">Phosphoprotein</keyword>
<keyword id="KW-1185">Reference proteome</keyword>
<evidence type="ECO:0000255" key="1">
    <source>
        <dbReference type="HAMAP-Rule" id="MF_03140"/>
    </source>
</evidence>
<evidence type="ECO:0000256" key="2">
    <source>
        <dbReference type="SAM" id="MobiDB-lite"/>
    </source>
</evidence>
<protein>
    <recommendedName>
        <fullName evidence="1">Flap endonuclease 1</fullName>
        <shortName evidence="1">FEN-1</shortName>
        <ecNumber evidence="1">3.1.-.-</ecNumber>
    </recommendedName>
    <alternativeName>
        <fullName evidence="1">Flap structure-specific endonuclease 1</fullName>
    </alternativeName>
</protein>